<evidence type="ECO:0000255" key="1">
    <source>
        <dbReference type="HAMAP-Rule" id="MF_01559"/>
    </source>
</evidence>
<feature type="chain" id="PRO_0000383436" description="L-lactate dehydrogenase">
    <location>
        <begin position="1"/>
        <end position="381"/>
    </location>
</feature>
<feature type="domain" description="FMN hydroxy acid dehydrogenase" evidence="1">
    <location>
        <begin position="1"/>
        <end position="380"/>
    </location>
</feature>
<feature type="active site" description="Proton acceptor" evidence="1">
    <location>
        <position position="275"/>
    </location>
</feature>
<feature type="binding site" evidence="1">
    <location>
        <position position="24"/>
    </location>
    <ligand>
        <name>substrate</name>
    </ligand>
</feature>
<feature type="binding site" evidence="1">
    <location>
        <position position="106"/>
    </location>
    <ligand>
        <name>FMN</name>
        <dbReference type="ChEBI" id="CHEBI:58210"/>
    </ligand>
</feature>
<feature type="binding site" evidence="1">
    <location>
        <position position="127"/>
    </location>
    <ligand>
        <name>FMN</name>
        <dbReference type="ChEBI" id="CHEBI:58210"/>
    </ligand>
</feature>
<feature type="binding site" evidence="1">
    <location>
        <position position="129"/>
    </location>
    <ligand>
        <name>substrate</name>
    </ligand>
</feature>
<feature type="binding site" evidence="1">
    <location>
        <position position="155"/>
    </location>
    <ligand>
        <name>FMN</name>
        <dbReference type="ChEBI" id="CHEBI:58210"/>
    </ligand>
</feature>
<feature type="binding site" evidence="1">
    <location>
        <position position="164"/>
    </location>
    <ligand>
        <name>substrate</name>
    </ligand>
</feature>
<feature type="binding site" evidence="1">
    <location>
        <position position="251"/>
    </location>
    <ligand>
        <name>FMN</name>
        <dbReference type="ChEBI" id="CHEBI:58210"/>
    </ligand>
</feature>
<feature type="binding site" evidence="1">
    <location>
        <position position="278"/>
    </location>
    <ligand>
        <name>substrate</name>
    </ligand>
</feature>
<feature type="binding site" evidence="1">
    <location>
        <begin position="306"/>
        <end position="330"/>
    </location>
    <ligand>
        <name>FMN</name>
        <dbReference type="ChEBI" id="CHEBI:58210"/>
    </ligand>
</feature>
<organism>
    <name type="scientific">Pseudomonas putida (strain W619)</name>
    <dbReference type="NCBI Taxonomy" id="390235"/>
    <lineage>
        <taxon>Bacteria</taxon>
        <taxon>Pseudomonadati</taxon>
        <taxon>Pseudomonadota</taxon>
        <taxon>Gammaproteobacteria</taxon>
        <taxon>Pseudomonadales</taxon>
        <taxon>Pseudomonadaceae</taxon>
        <taxon>Pseudomonas</taxon>
    </lineage>
</organism>
<comment type="function">
    <text evidence="1">Catalyzes the conversion of L-lactate to pyruvate. Is coupled to the respiratory chain.</text>
</comment>
<comment type="catalytic activity">
    <reaction evidence="1">
        <text>(S)-lactate + A = pyruvate + AH2</text>
        <dbReference type="Rhea" id="RHEA:45816"/>
        <dbReference type="ChEBI" id="CHEBI:13193"/>
        <dbReference type="ChEBI" id="CHEBI:15361"/>
        <dbReference type="ChEBI" id="CHEBI:16651"/>
        <dbReference type="ChEBI" id="CHEBI:17499"/>
    </reaction>
</comment>
<comment type="cofactor">
    <cofactor evidence="1">
        <name>FMN</name>
        <dbReference type="ChEBI" id="CHEBI:58210"/>
    </cofactor>
</comment>
<comment type="subunit">
    <text evidence="1">Homotetramer.</text>
</comment>
<comment type="subcellular location">
    <subcellularLocation>
        <location evidence="1">Cell inner membrane</location>
        <topology evidence="1">Peripheral membrane protein</topology>
    </subcellularLocation>
</comment>
<comment type="similarity">
    <text evidence="1">Belongs to the FMN-dependent alpha-hydroxy acid dehydrogenase family.</text>
</comment>
<sequence>MIISASTDYRAAAQRKLPPFLFHYADGGAYAEHTLRHNVSDLAGIALRQRVLKNMSELSLETRLFDETLSMPVALAPVGLTGMYARRGEVQAARAAAAHGIPFTMSTVSVCPIEEVAPAIDRPMWFQLYVLKDRGFMRNALERAKAAGVKTLVFTVDMPVPGARYRDAHSGMSGANGPMRRVLQAMTHPEWAWDVGVMGRPHDLGNISKYRGNPTGLADYIGWLGSNFDPSISWKDLEWIREFWDGPMIIKGILDADDARDAVKFGADGIVVSNHGGRQLDGVLSSARALPAIADAVKGDLKILADSGIRSGLDVVRMIALGADTVLIGRAFLWALAVHGQAGVKNLLELFEKEMRVAMVLTGAKAISEISRDSLVRELGA</sequence>
<accession>B1J244</accession>
<reference key="1">
    <citation type="submission" date="2008-02" db="EMBL/GenBank/DDBJ databases">
        <title>Complete sequence of Pseudomonas putida W619.</title>
        <authorList>
            <person name="Copeland A."/>
            <person name="Lucas S."/>
            <person name="Lapidus A."/>
            <person name="Barry K."/>
            <person name="Detter J.C."/>
            <person name="Glavina del Rio T."/>
            <person name="Dalin E."/>
            <person name="Tice H."/>
            <person name="Pitluck S."/>
            <person name="Chain P."/>
            <person name="Malfatti S."/>
            <person name="Shin M."/>
            <person name="Vergez L."/>
            <person name="Schmutz J."/>
            <person name="Larimer F."/>
            <person name="Land M."/>
            <person name="Hauser L."/>
            <person name="Kyrpides N."/>
            <person name="Kim E."/>
            <person name="Taghavi S."/>
            <person name="Vangronsveld D."/>
            <person name="van der Lelie D."/>
            <person name="Richardson P."/>
        </authorList>
    </citation>
    <scope>NUCLEOTIDE SEQUENCE [LARGE SCALE GENOMIC DNA]</scope>
    <source>
        <strain>W619</strain>
    </source>
</reference>
<name>LLDD_PSEPW</name>
<protein>
    <recommendedName>
        <fullName evidence="1">L-lactate dehydrogenase</fullName>
        <ecNumber evidence="1">1.1.-.-</ecNumber>
    </recommendedName>
</protein>
<proteinExistence type="inferred from homology"/>
<keyword id="KW-0997">Cell inner membrane</keyword>
<keyword id="KW-1003">Cell membrane</keyword>
<keyword id="KW-0285">Flavoprotein</keyword>
<keyword id="KW-0288">FMN</keyword>
<keyword id="KW-0472">Membrane</keyword>
<keyword id="KW-0560">Oxidoreductase</keyword>
<dbReference type="EC" id="1.1.-.-" evidence="1"/>
<dbReference type="EMBL" id="CP000949">
    <property type="protein sequence ID" value="ACA71200.1"/>
    <property type="molecule type" value="Genomic_DNA"/>
</dbReference>
<dbReference type="SMR" id="B1J244"/>
<dbReference type="STRING" id="390235.PputW619_0695"/>
<dbReference type="KEGG" id="ppw:PputW619_0695"/>
<dbReference type="eggNOG" id="COG1304">
    <property type="taxonomic scope" value="Bacteria"/>
</dbReference>
<dbReference type="HOGENOM" id="CLU_020639_0_0_6"/>
<dbReference type="OrthoDB" id="9770452at2"/>
<dbReference type="GO" id="GO:0005886">
    <property type="term" value="C:plasma membrane"/>
    <property type="evidence" value="ECO:0007669"/>
    <property type="project" value="UniProtKB-SubCell"/>
</dbReference>
<dbReference type="GO" id="GO:0010181">
    <property type="term" value="F:FMN binding"/>
    <property type="evidence" value="ECO:0007669"/>
    <property type="project" value="InterPro"/>
</dbReference>
<dbReference type="GO" id="GO:0004459">
    <property type="term" value="F:L-lactate dehydrogenase activity"/>
    <property type="evidence" value="ECO:0007669"/>
    <property type="project" value="UniProtKB-UniRule"/>
</dbReference>
<dbReference type="GO" id="GO:0009060">
    <property type="term" value="P:aerobic respiration"/>
    <property type="evidence" value="ECO:0007669"/>
    <property type="project" value="TreeGrafter"/>
</dbReference>
<dbReference type="GO" id="GO:0006089">
    <property type="term" value="P:lactate metabolic process"/>
    <property type="evidence" value="ECO:0007669"/>
    <property type="project" value="UniProtKB-UniRule"/>
</dbReference>
<dbReference type="CDD" id="cd02809">
    <property type="entry name" value="alpha_hydroxyacid_oxid_FMN"/>
    <property type="match status" value="1"/>
</dbReference>
<dbReference type="FunFam" id="3.20.20.70:FF:000029">
    <property type="entry name" value="L-lactate dehydrogenase"/>
    <property type="match status" value="1"/>
</dbReference>
<dbReference type="Gene3D" id="3.20.20.70">
    <property type="entry name" value="Aldolase class I"/>
    <property type="match status" value="1"/>
</dbReference>
<dbReference type="HAMAP" id="MF_01559">
    <property type="entry name" value="L_lact_dehydr"/>
    <property type="match status" value="1"/>
</dbReference>
<dbReference type="InterPro" id="IPR013785">
    <property type="entry name" value="Aldolase_TIM"/>
</dbReference>
<dbReference type="InterPro" id="IPR012133">
    <property type="entry name" value="Alpha-hydoxy_acid_DH_FMN"/>
</dbReference>
<dbReference type="InterPro" id="IPR000262">
    <property type="entry name" value="FMN-dep_DH"/>
</dbReference>
<dbReference type="InterPro" id="IPR037396">
    <property type="entry name" value="FMN_HAD"/>
</dbReference>
<dbReference type="InterPro" id="IPR008259">
    <property type="entry name" value="FMN_hydac_DH_AS"/>
</dbReference>
<dbReference type="InterPro" id="IPR020920">
    <property type="entry name" value="LldD"/>
</dbReference>
<dbReference type="NCBIfam" id="NF033901">
    <property type="entry name" value="L_lactate_LldD"/>
    <property type="match status" value="1"/>
</dbReference>
<dbReference type="NCBIfam" id="NF008398">
    <property type="entry name" value="PRK11197.1"/>
    <property type="match status" value="1"/>
</dbReference>
<dbReference type="PANTHER" id="PTHR10578:SF85">
    <property type="entry name" value="L-LACTATE DEHYDROGENASE"/>
    <property type="match status" value="1"/>
</dbReference>
<dbReference type="PANTHER" id="PTHR10578">
    <property type="entry name" value="S -2-HYDROXY-ACID OXIDASE-RELATED"/>
    <property type="match status" value="1"/>
</dbReference>
<dbReference type="Pfam" id="PF01070">
    <property type="entry name" value="FMN_dh"/>
    <property type="match status" value="1"/>
</dbReference>
<dbReference type="PIRSF" id="PIRSF000138">
    <property type="entry name" value="Al-hdrx_acd_dh"/>
    <property type="match status" value="1"/>
</dbReference>
<dbReference type="SUPFAM" id="SSF51395">
    <property type="entry name" value="FMN-linked oxidoreductases"/>
    <property type="match status" value="1"/>
</dbReference>
<dbReference type="PROSITE" id="PS00557">
    <property type="entry name" value="FMN_HYDROXY_ACID_DH_1"/>
    <property type="match status" value="1"/>
</dbReference>
<dbReference type="PROSITE" id="PS51349">
    <property type="entry name" value="FMN_HYDROXY_ACID_DH_2"/>
    <property type="match status" value="1"/>
</dbReference>
<gene>
    <name evidence="1" type="primary">lldD</name>
    <name type="ordered locus">PputW619_0695</name>
</gene>